<accession>Q0BML9</accession>
<feature type="chain" id="PRO_1000053435" description="Phosphatidylglycerol--prolipoprotein diacylglyceryl transferase">
    <location>
        <begin position="1"/>
        <end position="268"/>
    </location>
</feature>
<feature type="transmembrane region" description="Helical" evidence="1">
    <location>
        <begin position="14"/>
        <end position="34"/>
    </location>
</feature>
<feature type="transmembrane region" description="Helical" evidence="1">
    <location>
        <begin position="57"/>
        <end position="77"/>
    </location>
</feature>
<feature type="transmembrane region" description="Helical" evidence="1">
    <location>
        <begin position="90"/>
        <end position="110"/>
    </location>
</feature>
<feature type="transmembrane region" description="Helical" evidence="1">
    <location>
        <begin position="117"/>
        <end position="137"/>
    </location>
</feature>
<feature type="transmembrane region" description="Helical" evidence="1">
    <location>
        <begin position="174"/>
        <end position="194"/>
    </location>
</feature>
<feature type="transmembrane region" description="Helical" evidence="1">
    <location>
        <begin position="200"/>
        <end position="220"/>
    </location>
</feature>
<feature type="transmembrane region" description="Helical" evidence="1">
    <location>
        <begin position="238"/>
        <end position="258"/>
    </location>
</feature>
<feature type="binding site" evidence="1">
    <location>
        <position position="140"/>
    </location>
    <ligand>
        <name>a 1,2-diacyl-sn-glycero-3-phospho-(1'-sn-glycerol)</name>
        <dbReference type="ChEBI" id="CHEBI:64716"/>
    </ligand>
</feature>
<gene>
    <name evidence="1" type="primary">lgt</name>
    <name type="ordered locus">FTH_0718</name>
</gene>
<dbReference type="EC" id="2.5.1.145" evidence="1"/>
<dbReference type="EMBL" id="CP000437">
    <property type="protein sequence ID" value="ABI82665.1"/>
    <property type="molecule type" value="Genomic_DNA"/>
</dbReference>
<dbReference type="RefSeq" id="WP_010032772.1">
    <property type="nucleotide sequence ID" value="NC_017463.1"/>
</dbReference>
<dbReference type="SMR" id="Q0BML9"/>
<dbReference type="KEGG" id="fth:FTH_0718"/>
<dbReference type="UniPathway" id="UPA00664"/>
<dbReference type="GO" id="GO:0005886">
    <property type="term" value="C:plasma membrane"/>
    <property type="evidence" value="ECO:0007669"/>
    <property type="project" value="UniProtKB-SubCell"/>
</dbReference>
<dbReference type="GO" id="GO:0008961">
    <property type="term" value="F:phosphatidylglycerol-prolipoprotein diacylglyceryl transferase activity"/>
    <property type="evidence" value="ECO:0007669"/>
    <property type="project" value="UniProtKB-UniRule"/>
</dbReference>
<dbReference type="GO" id="GO:0042158">
    <property type="term" value="P:lipoprotein biosynthetic process"/>
    <property type="evidence" value="ECO:0007669"/>
    <property type="project" value="UniProtKB-UniRule"/>
</dbReference>
<dbReference type="HAMAP" id="MF_01147">
    <property type="entry name" value="Lgt"/>
    <property type="match status" value="1"/>
</dbReference>
<dbReference type="InterPro" id="IPR001640">
    <property type="entry name" value="Lgt"/>
</dbReference>
<dbReference type="NCBIfam" id="TIGR00544">
    <property type="entry name" value="lgt"/>
    <property type="match status" value="1"/>
</dbReference>
<dbReference type="PANTHER" id="PTHR30589:SF0">
    <property type="entry name" value="PHOSPHATIDYLGLYCEROL--PROLIPOPROTEIN DIACYLGLYCERYL TRANSFERASE"/>
    <property type="match status" value="1"/>
</dbReference>
<dbReference type="PANTHER" id="PTHR30589">
    <property type="entry name" value="PROLIPOPROTEIN DIACYLGLYCERYL TRANSFERASE"/>
    <property type="match status" value="1"/>
</dbReference>
<dbReference type="Pfam" id="PF01790">
    <property type="entry name" value="LGT"/>
    <property type="match status" value="1"/>
</dbReference>
<dbReference type="PROSITE" id="PS01311">
    <property type="entry name" value="LGT"/>
    <property type="match status" value="1"/>
</dbReference>
<protein>
    <recommendedName>
        <fullName evidence="1">Phosphatidylglycerol--prolipoprotein diacylglyceryl transferase</fullName>
        <ecNumber evidence="1">2.5.1.145</ecNumber>
    </recommendedName>
</protein>
<proteinExistence type="inferred from homology"/>
<comment type="function">
    <text evidence="1">Catalyzes the transfer of the diacylglyceryl group from phosphatidylglycerol to the sulfhydryl group of the N-terminal cysteine of a prolipoprotein, the first step in the formation of mature lipoproteins.</text>
</comment>
<comment type="catalytic activity">
    <reaction evidence="1">
        <text>L-cysteinyl-[prolipoprotein] + a 1,2-diacyl-sn-glycero-3-phospho-(1'-sn-glycerol) = an S-1,2-diacyl-sn-glyceryl-L-cysteinyl-[prolipoprotein] + sn-glycerol 1-phosphate + H(+)</text>
        <dbReference type="Rhea" id="RHEA:56712"/>
        <dbReference type="Rhea" id="RHEA-COMP:14679"/>
        <dbReference type="Rhea" id="RHEA-COMP:14680"/>
        <dbReference type="ChEBI" id="CHEBI:15378"/>
        <dbReference type="ChEBI" id="CHEBI:29950"/>
        <dbReference type="ChEBI" id="CHEBI:57685"/>
        <dbReference type="ChEBI" id="CHEBI:64716"/>
        <dbReference type="ChEBI" id="CHEBI:140658"/>
        <dbReference type="EC" id="2.5.1.145"/>
    </reaction>
</comment>
<comment type="pathway">
    <text evidence="1">Protein modification; lipoprotein biosynthesis (diacylglyceryl transfer).</text>
</comment>
<comment type="subcellular location">
    <subcellularLocation>
        <location evidence="1">Cell inner membrane</location>
        <topology evidence="1">Multi-pass membrane protein</topology>
    </subcellularLocation>
</comment>
<comment type="similarity">
    <text evidence="1">Belongs to the Lgt family.</text>
</comment>
<organism>
    <name type="scientific">Francisella tularensis subsp. holarctica (strain OSU18)</name>
    <dbReference type="NCBI Taxonomy" id="393011"/>
    <lineage>
        <taxon>Bacteria</taxon>
        <taxon>Pseudomonadati</taxon>
        <taxon>Pseudomonadota</taxon>
        <taxon>Gammaproteobacteria</taxon>
        <taxon>Thiotrichales</taxon>
        <taxon>Francisellaceae</taxon>
        <taxon>Francisella</taxon>
    </lineage>
</organism>
<sequence>MLQYPHINPVALQLGPIKIHWYGLMYLLGIFAGWYLTRYRAKVKPWAPIKPEQVGDLTFYVALGVILGGRIGYIIFYNLPYYFHNPSQMFFLWDGGMSFHGGFIGVLIAFALFARKIGANFFDLGEFVAPVIPIGLGAGRIGNFINGELLGKVTDSPLGMVFPTGGPLPRYPSQLFEFFFEGVVLFSVLWLVTIKKRPRYLVLGLFMFLYGYARFICEFFRQPDPQYGYIFFNWMTMGQILSIPMILLGAVILIAVFIKTRKNKCENI</sequence>
<name>LGT_FRATO</name>
<reference key="1">
    <citation type="journal article" date="2006" name="J. Bacteriol.">
        <title>Chromosome rearrangement and diversification of Francisella tularensis revealed by the type B (OSU18) genome sequence.</title>
        <authorList>
            <person name="Petrosino J.F."/>
            <person name="Xiang Q."/>
            <person name="Karpathy S.E."/>
            <person name="Jiang H."/>
            <person name="Yerrapragada S."/>
            <person name="Liu Y."/>
            <person name="Gioia J."/>
            <person name="Hemphill L."/>
            <person name="Gonzalez A."/>
            <person name="Raghavan T.M."/>
            <person name="Uzman A."/>
            <person name="Fox G.E."/>
            <person name="Highlander S."/>
            <person name="Reichard M."/>
            <person name="Morton R.J."/>
            <person name="Clinkenbeard K.D."/>
            <person name="Weinstock G.M."/>
        </authorList>
    </citation>
    <scope>NUCLEOTIDE SEQUENCE [LARGE SCALE GENOMIC DNA]</scope>
    <source>
        <strain>OSU18</strain>
    </source>
</reference>
<keyword id="KW-0997">Cell inner membrane</keyword>
<keyword id="KW-1003">Cell membrane</keyword>
<keyword id="KW-0472">Membrane</keyword>
<keyword id="KW-0808">Transferase</keyword>
<keyword id="KW-0812">Transmembrane</keyword>
<keyword id="KW-1133">Transmembrane helix</keyword>
<evidence type="ECO:0000255" key="1">
    <source>
        <dbReference type="HAMAP-Rule" id="MF_01147"/>
    </source>
</evidence>